<accession>Q3MFA4</accession>
<sequence>MRLNDVKPQKGSKKRRRRVGRGISAGQGASAGLGMRGQKSRSGSGTRPGFEGGQQPLYRRIPKLKGFPVVNRKIYTTINVEKLADLPANTEVTLESLRASGILTAVKGPLKVLGNGDLGVALNVKAAAFTGQARSKIEAAGGSCEVLG</sequence>
<protein>
    <recommendedName>
        <fullName evidence="1">Large ribosomal subunit protein uL15</fullName>
    </recommendedName>
    <alternativeName>
        <fullName evidence="3">50S ribosomal protein L15</fullName>
    </alternativeName>
</protein>
<organism>
    <name type="scientific">Trichormus variabilis (strain ATCC 29413 / PCC 7937)</name>
    <name type="common">Anabaena variabilis</name>
    <dbReference type="NCBI Taxonomy" id="240292"/>
    <lineage>
        <taxon>Bacteria</taxon>
        <taxon>Bacillati</taxon>
        <taxon>Cyanobacteriota</taxon>
        <taxon>Cyanophyceae</taxon>
        <taxon>Nostocales</taxon>
        <taxon>Nostocaceae</taxon>
        <taxon>Trichormus</taxon>
    </lineage>
</organism>
<feature type="chain" id="PRO_0000251485" description="Large ribosomal subunit protein uL15">
    <location>
        <begin position="1"/>
        <end position="148"/>
    </location>
</feature>
<feature type="region of interest" description="Disordered" evidence="2">
    <location>
        <begin position="1"/>
        <end position="57"/>
    </location>
</feature>
<feature type="compositionally biased region" description="Basic residues" evidence="2">
    <location>
        <begin position="10"/>
        <end position="20"/>
    </location>
</feature>
<feature type="compositionally biased region" description="Gly residues" evidence="2">
    <location>
        <begin position="23"/>
        <end position="35"/>
    </location>
</feature>
<evidence type="ECO:0000255" key="1">
    <source>
        <dbReference type="HAMAP-Rule" id="MF_01341"/>
    </source>
</evidence>
<evidence type="ECO:0000256" key="2">
    <source>
        <dbReference type="SAM" id="MobiDB-lite"/>
    </source>
</evidence>
<evidence type="ECO:0000305" key="3"/>
<reference key="1">
    <citation type="journal article" date="2014" name="Stand. Genomic Sci.">
        <title>Complete genome sequence of Anabaena variabilis ATCC 29413.</title>
        <authorList>
            <person name="Thiel T."/>
            <person name="Pratte B.S."/>
            <person name="Zhong J."/>
            <person name="Goodwin L."/>
            <person name="Copeland A."/>
            <person name="Lucas S."/>
            <person name="Han C."/>
            <person name="Pitluck S."/>
            <person name="Land M.L."/>
            <person name="Kyrpides N.C."/>
            <person name="Woyke T."/>
        </authorList>
    </citation>
    <scope>NUCLEOTIDE SEQUENCE [LARGE SCALE GENOMIC DNA]</scope>
    <source>
        <strain>ATCC 29413 / PCC 7937</strain>
    </source>
</reference>
<name>RL15_TRIV2</name>
<proteinExistence type="inferred from homology"/>
<dbReference type="EMBL" id="CP000117">
    <property type="protein sequence ID" value="ABA20332.1"/>
    <property type="molecule type" value="Genomic_DNA"/>
</dbReference>
<dbReference type="SMR" id="Q3MFA4"/>
<dbReference type="STRING" id="240292.Ava_0708"/>
<dbReference type="KEGG" id="ava:Ava_0708"/>
<dbReference type="eggNOG" id="COG0200">
    <property type="taxonomic scope" value="Bacteria"/>
</dbReference>
<dbReference type="HOGENOM" id="CLU_055188_4_2_3"/>
<dbReference type="Proteomes" id="UP000002533">
    <property type="component" value="Chromosome"/>
</dbReference>
<dbReference type="GO" id="GO:0022625">
    <property type="term" value="C:cytosolic large ribosomal subunit"/>
    <property type="evidence" value="ECO:0007669"/>
    <property type="project" value="TreeGrafter"/>
</dbReference>
<dbReference type="GO" id="GO:0019843">
    <property type="term" value="F:rRNA binding"/>
    <property type="evidence" value="ECO:0007669"/>
    <property type="project" value="UniProtKB-UniRule"/>
</dbReference>
<dbReference type="GO" id="GO:0003735">
    <property type="term" value="F:structural constituent of ribosome"/>
    <property type="evidence" value="ECO:0007669"/>
    <property type="project" value="InterPro"/>
</dbReference>
<dbReference type="GO" id="GO:0006412">
    <property type="term" value="P:translation"/>
    <property type="evidence" value="ECO:0007669"/>
    <property type="project" value="UniProtKB-UniRule"/>
</dbReference>
<dbReference type="Gene3D" id="3.100.10.10">
    <property type="match status" value="1"/>
</dbReference>
<dbReference type="HAMAP" id="MF_01341">
    <property type="entry name" value="Ribosomal_uL15"/>
    <property type="match status" value="1"/>
</dbReference>
<dbReference type="InterPro" id="IPR030878">
    <property type="entry name" value="Ribosomal_uL15"/>
</dbReference>
<dbReference type="InterPro" id="IPR021131">
    <property type="entry name" value="Ribosomal_uL15/eL18"/>
</dbReference>
<dbReference type="InterPro" id="IPR036227">
    <property type="entry name" value="Ribosomal_uL15/eL18_sf"/>
</dbReference>
<dbReference type="InterPro" id="IPR005749">
    <property type="entry name" value="Ribosomal_uL15_bac-type"/>
</dbReference>
<dbReference type="InterPro" id="IPR001196">
    <property type="entry name" value="Ribosomal_uL15_CS"/>
</dbReference>
<dbReference type="NCBIfam" id="TIGR01071">
    <property type="entry name" value="rplO_bact"/>
    <property type="match status" value="1"/>
</dbReference>
<dbReference type="PANTHER" id="PTHR12934">
    <property type="entry name" value="50S RIBOSOMAL PROTEIN L15"/>
    <property type="match status" value="1"/>
</dbReference>
<dbReference type="PANTHER" id="PTHR12934:SF11">
    <property type="entry name" value="LARGE RIBOSOMAL SUBUNIT PROTEIN UL15M"/>
    <property type="match status" value="1"/>
</dbReference>
<dbReference type="Pfam" id="PF00828">
    <property type="entry name" value="Ribosomal_L27A"/>
    <property type="match status" value="1"/>
</dbReference>
<dbReference type="SUPFAM" id="SSF52080">
    <property type="entry name" value="Ribosomal proteins L15p and L18e"/>
    <property type="match status" value="1"/>
</dbReference>
<dbReference type="PROSITE" id="PS00475">
    <property type="entry name" value="RIBOSOMAL_L15"/>
    <property type="match status" value="1"/>
</dbReference>
<keyword id="KW-0687">Ribonucleoprotein</keyword>
<keyword id="KW-0689">Ribosomal protein</keyword>
<keyword id="KW-0694">RNA-binding</keyword>
<keyword id="KW-0699">rRNA-binding</keyword>
<comment type="function">
    <text evidence="1">Binds to the 23S rRNA.</text>
</comment>
<comment type="subunit">
    <text evidence="1">Part of the 50S ribosomal subunit.</text>
</comment>
<comment type="similarity">
    <text evidence="1">Belongs to the universal ribosomal protein uL15 family.</text>
</comment>
<gene>
    <name evidence="1" type="primary">rplO</name>
    <name type="ordered locus">Ava_0708</name>
</gene>